<sequence>MDIEKRILELREILNYHSHKYYVEDAPEISDFEYDELYRELEKLEQERPDLITPDSPTQRIGGKPLEGFKKVVHAVQMQSLSDVFSREELLAFDRRVREAVGDDVEYVVEKKIDGLSVSLVYENGVFTRGATRGDGLVGEDVTQNLKTIRTIPLRLKRDLPLLEVRGEVFISKKDFIKINEEQEAAGQQLFANPRNAAAGSLRQLDPKVTSQRKLDIFVFNIQRIEGQSFKTHSETLEFLKELGFKTSPGYKVCKDINAVWEEINRIGEERGEIDFEIDGAVVKVNSLEQREILGSTIKAPRWAVAYKYPAEVKETVVKKITVNVGRTGVLTPIAIFDPVRLAGSTVSRATLHNMDYIKEKDIRIGDTVRIRKAGDIIPEVVDVVFEKRSGNEAEFNMPEQCPVCGADVVREEGEAAYRCTGIECSAQLYRKIVHFASRDAMNIEGLGPAIIEVLLEKGLIKEIADLYYLHKEKETLVNIERMGKKSVENLLASIEKSKQNNIDRLIFGFGIRHIGLRAAQLLSENFESLDALMNASAEDIMAIPEFGEKMAKSVEQFFRQKQNRDTVEKLKAAGVNTVSFGKKKIKDNRFEGKTFVLTGTLPSFTRKEAEEIIKSFGGKTSGSVSKKTDYVLAGEDAGSKLQKAKELGIEIIDEDKFRKMIE</sequence>
<dbReference type="EC" id="6.5.1.2" evidence="1"/>
<dbReference type="EMBL" id="CP000568">
    <property type="protein sequence ID" value="ABN52267.1"/>
    <property type="molecule type" value="Genomic_DNA"/>
</dbReference>
<dbReference type="RefSeq" id="WP_003515625.1">
    <property type="nucleotide sequence ID" value="NC_009012.1"/>
</dbReference>
<dbReference type="SMR" id="A3DE88"/>
<dbReference type="STRING" id="203119.Cthe_1035"/>
<dbReference type="GeneID" id="35805052"/>
<dbReference type="KEGG" id="cth:Cthe_1035"/>
<dbReference type="eggNOG" id="COG0272">
    <property type="taxonomic scope" value="Bacteria"/>
</dbReference>
<dbReference type="HOGENOM" id="CLU_007764_2_1_9"/>
<dbReference type="OrthoDB" id="9759736at2"/>
<dbReference type="Proteomes" id="UP000002145">
    <property type="component" value="Chromosome"/>
</dbReference>
<dbReference type="GO" id="GO:0003677">
    <property type="term" value="F:DNA binding"/>
    <property type="evidence" value="ECO:0007669"/>
    <property type="project" value="InterPro"/>
</dbReference>
<dbReference type="GO" id="GO:0003911">
    <property type="term" value="F:DNA ligase (NAD+) activity"/>
    <property type="evidence" value="ECO:0007669"/>
    <property type="project" value="UniProtKB-UniRule"/>
</dbReference>
<dbReference type="GO" id="GO:0046872">
    <property type="term" value="F:metal ion binding"/>
    <property type="evidence" value="ECO:0007669"/>
    <property type="project" value="UniProtKB-KW"/>
</dbReference>
<dbReference type="GO" id="GO:0006281">
    <property type="term" value="P:DNA repair"/>
    <property type="evidence" value="ECO:0007669"/>
    <property type="project" value="UniProtKB-KW"/>
</dbReference>
<dbReference type="GO" id="GO:0006260">
    <property type="term" value="P:DNA replication"/>
    <property type="evidence" value="ECO:0007669"/>
    <property type="project" value="UniProtKB-KW"/>
</dbReference>
<dbReference type="CDD" id="cd00114">
    <property type="entry name" value="LIGANc"/>
    <property type="match status" value="1"/>
</dbReference>
<dbReference type="FunFam" id="1.10.150.20:FF:000006">
    <property type="entry name" value="DNA ligase"/>
    <property type="match status" value="1"/>
</dbReference>
<dbReference type="FunFam" id="1.10.150.20:FF:000007">
    <property type="entry name" value="DNA ligase"/>
    <property type="match status" value="1"/>
</dbReference>
<dbReference type="FunFam" id="1.10.287.610:FF:000002">
    <property type="entry name" value="DNA ligase"/>
    <property type="match status" value="1"/>
</dbReference>
<dbReference type="FunFam" id="2.40.50.140:FF:000012">
    <property type="entry name" value="DNA ligase"/>
    <property type="match status" value="1"/>
</dbReference>
<dbReference type="FunFam" id="3.30.470.30:FF:000001">
    <property type="entry name" value="DNA ligase"/>
    <property type="match status" value="1"/>
</dbReference>
<dbReference type="Gene3D" id="6.20.10.30">
    <property type="match status" value="1"/>
</dbReference>
<dbReference type="Gene3D" id="1.10.150.20">
    <property type="entry name" value="5' to 3' exonuclease, C-terminal subdomain"/>
    <property type="match status" value="2"/>
</dbReference>
<dbReference type="Gene3D" id="3.40.50.10190">
    <property type="entry name" value="BRCT domain"/>
    <property type="match status" value="1"/>
</dbReference>
<dbReference type="Gene3D" id="3.30.470.30">
    <property type="entry name" value="DNA ligase/mRNA capping enzyme"/>
    <property type="match status" value="1"/>
</dbReference>
<dbReference type="Gene3D" id="1.10.287.610">
    <property type="entry name" value="Helix hairpin bin"/>
    <property type="match status" value="1"/>
</dbReference>
<dbReference type="Gene3D" id="2.40.50.140">
    <property type="entry name" value="Nucleic acid-binding proteins"/>
    <property type="match status" value="1"/>
</dbReference>
<dbReference type="HAMAP" id="MF_01588">
    <property type="entry name" value="DNA_ligase_A"/>
    <property type="match status" value="1"/>
</dbReference>
<dbReference type="InterPro" id="IPR001357">
    <property type="entry name" value="BRCT_dom"/>
</dbReference>
<dbReference type="InterPro" id="IPR036420">
    <property type="entry name" value="BRCT_dom_sf"/>
</dbReference>
<dbReference type="InterPro" id="IPR041663">
    <property type="entry name" value="DisA/LigA_HHH"/>
</dbReference>
<dbReference type="InterPro" id="IPR001679">
    <property type="entry name" value="DNA_ligase"/>
</dbReference>
<dbReference type="InterPro" id="IPR018239">
    <property type="entry name" value="DNA_ligase_AS"/>
</dbReference>
<dbReference type="InterPro" id="IPR013839">
    <property type="entry name" value="DNAligase_adenylation"/>
</dbReference>
<dbReference type="InterPro" id="IPR013840">
    <property type="entry name" value="DNAligase_N"/>
</dbReference>
<dbReference type="InterPro" id="IPR003583">
    <property type="entry name" value="Hlx-hairpin-Hlx_DNA-bd_motif"/>
</dbReference>
<dbReference type="InterPro" id="IPR012340">
    <property type="entry name" value="NA-bd_OB-fold"/>
</dbReference>
<dbReference type="InterPro" id="IPR004150">
    <property type="entry name" value="NAD_DNA_ligase_OB"/>
</dbReference>
<dbReference type="InterPro" id="IPR010994">
    <property type="entry name" value="RuvA_2-like"/>
</dbReference>
<dbReference type="InterPro" id="IPR004149">
    <property type="entry name" value="Znf_DNAligase_C4"/>
</dbReference>
<dbReference type="NCBIfam" id="TIGR00575">
    <property type="entry name" value="dnlj"/>
    <property type="match status" value="1"/>
</dbReference>
<dbReference type="NCBIfam" id="NF005932">
    <property type="entry name" value="PRK07956.1"/>
    <property type="match status" value="1"/>
</dbReference>
<dbReference type="PANTHER" id="PTHR23389">
    <property type="entry name" value="CHROMOSOME TRANSMISSION FIDELITY FACTOR 18"/>
    <property type="match status" value="1"/>
</dbReference>
<dbReference type="PANTHER" id="PTHR23389:SF6">
    <property type="entry name" value="REPLICATION FACTOR C SUBUNIT 1"/>
    <property type="match status" value="1"/>
</dbReference>
<dbReference type="Pfam" id="PF00533">
    <property type="entry name" value="BRCT"/>
    <property type="match status" value="1"/>
</dbReference>
<dbReference type="Pfam" id="PF01653">
    <property type="entry name" value="DNA_ligase_aden"/>
    <property type="match status" value="1"/>
</dbReference>
<dbReference type="Pfam" id="PF03120">
    <property type="entry name" value="DNA_ligase_OB"/>
    <property type="match status" value="1"/>
</dbReference>
<dbReference type="Pfam" id="PF03119">
    <property type="entry name" value="DNA_ligase_ZBD"/>
    <property type="match status" value="1"/>
</dbReference>
<dbReference type="Pfam" id="PF12826">
    <property type="entry name" value="HHH_2"/>
    <property type="match status" value="1"/>
</dbReference>
<dbReference type="Pfam" id="PF14520">
    <property type="entry name" value="HHH_5"/>
    <property type="match status" value="1"/>
</dbReference>
<dbReference type="Pfam" id="PF22745">
    <property type="entry name" value="Nlig-Ia"/>
    <property type="match status" value="1"/>
</dbReference>
<dbReference type="PIRSF" id="PIRSF001604">
    <property type="entry name" value="LigA"/>
    <property type="match status" value="1"/>
</dbReference>
<dbReference type="SMART" id="SM00292">
    <property type="entry name" value="BRCT"/>
    <property type="match status" value="1"/>
</dbReference>
<dbReference type="SMART" id="SM00278">
    <property type="entry name" value="HhH1"/>
    <property type="match status" value="3"/>
</dbReference>
<dbReference type="SMART" id="SM00532">
    <property type="entry name" value="LIGANc"/>
    <property type="match status" value="1"/>
</dbReference>
<dbReference type="SUPFAM" id="SSF52113">
    <property type="entry name" value="BRCT domain"/>
    <property type="match status" value="1"/>
</dbReference>
<dbReference type="SUPFAM" id="SSF56091">
    <property type="entry name" value="DNA ligase/mRNA capping enzyme, catalytic domain"/>
    <property type="match status" value="1"/>
</dbReference>
<dbReference type="SUPFAM" id="SSF50249">
    <property type="entry name" value="Nucleic acid-binding proteins"/>
    <property type="match status" value="1"/>
</dbReference>
<dbReference type="SUPFAM" id="SSF47781">
    <property type="entry name" value="RuvA domain 2-like"/>
    <property type="match status" value="1"/>
</dbReference>
<dbReference type="PROSITE" id="PS50172">
    <property type="entry name" value="BRCT"/>
    <property type="match status" value="1"/>
</dbReference>
<dbReference type="PROSITE" id="PS01055">
    <property type="entry name" value="DNA_LIGASE_N1"/>
    <property type="match status" value="1"/>
</dbReference>
<protein>
    <recommendedName>
        <fullName evidence="1">DNA ligase</fullName>
        <ecNumber evidence="1">6.5.1.2</ecNumber>
    </recommendedName>
    <alternativeName>
        <fullName evidence="1">Polydeoxyribonucleotide synthase [NAD(+)]</fullName>
    </alternativeName>
</protein>
<name>DNLJ_ACET2</name>
<organism>
    <name type="scientific">Acetivibrio thermocellus (strain ATCC 27405 / DSM 1237 / JCM 9322 / NBRC 103400 / NCIMB 10682 / NRRL B-4536 / VPI 7372)</name>
    <name type="common">Clostridium thermocellum</name>
    <dbReference type="NCBI Taxonomy" id="203119"/>
    <lineage>
        <taxon>Bacteria</taxon>
        <taxon>Bacillati</taxon>
        <taxon>Bacillota</taxon>
        <taxon>Clostridia</taxon>
        <taxon>Eubacteriales</taxon>
        <taxon>Oscillospiraceae</taxon>
        <taxon>Acetivibrio</taxon>
    </lineage>
</organism>
<feature type="chain" id="PRO_0000313203" description="DNA ligase">
    <location>
        <begin position="1"/>
        <end position="663"/>
    </location>
</feature>
<feature type="domain" description="BRCT" evidence="1">
    <location>
        <begin position="586"/>
        <end position="663"/>
    </location>
</feature>
<feature type="active site" description="N6-AMP-lysine intermediate" evidence="1">
    <location>
        <position position="112"/>
    </location>
</feature>
<feature type="binding site" evidence="1">
    <location>
        <begin position="31"/>
        <end position="35"/>
    </location>
    <ligand>
        <name>NAD(+)</name>
        <dbReference type="ChEBI" id="CHEBI:57540"/>
    </ligand>
</feature>
<feature type="binding site" evidence="1">
    <location>
        <begin position="80"/>
        <end position="81"/>
    </location>
    <ligand>
        <name>NAD(+)</name>
        <dbReference type="ChEBI" id="CHEBI:57540"/>
    </ligand>
</feature>
<feature type="binding site" evidence="1">
    <location>
        <position position="110"/>
    </location>
    <ligand>
        <name>NAD(+)</name>
        <dbReference type="ChEBI" id="CHEBI:57540"/>
    </ligand>
</feature>
<feature type="binding site" evidence="1">
    <location>
        <position position="133"/>
    </location>
    <ligand>
        <name>NAD(+)</name>
        <dbReference type="ChEBI" id="CHEBI:57540"/>
    </ligand>
</feature>
<feature type="binding site" evidence="1">
    <location>
        <position position="168"/>
    </location>
    <ligand>
        <name>NAD(+)</name>
        <dbReference type="ChEBI" id="CHEBI:57540"/>
    </ligand>
</feature>
<feature type="binding site" evidence="1">
    <location>
        <position position="284"/>
    </location>
    <ligand>
        <name>NAD(+)</name>
        <dbReference type="ChEBI" id="CHEBI:57540"/>
    </ligand>
</feature>
<feature type="binding site" evidence="1">
    <location>
        <position position="308"/>
    </location>
    <ligand>
        <name>NAD(+)</name>
        <dbReference type="ChEBI" id="CHEBI:57540"/>
    </ligand>
</feature>
<feature type="binding site" evidence="1">
    <location>
        <position position="402"/>
    </location>
    <ligand>
        <name>Zn(2+)</name>
        <dbReference type="ChEBI" id="CHEBI:29105"/>
    </ligand>
</feature>
<feature type="binding site" evidence="1">
    <location>
        <position position="405"/>
    </location>
    <ligand>
        <name>Zn(2+)</name>
        <dbReference type="ChEBI" id="CHEBI:29105"/>
    </ligand>
</feature>
<feature type="binding site" evidence="1">
    <location>
        <position position="420"/>
    </location>
    <ligand>
        <name>Zn(2+)</name>
        <dbReference type="ChEBI" id="CHEBI:29105"/>
    </ligand>
</feature>
<feature type="binding site" evidence="1">
    <location>
        <position position="425"/>
    </location>
    <ligand>
        <name>Zn(2+)</name>
        <dbReference type="ChEBI" id="CHEBI:29105"/>
    </ligand>
</feature>
<gene>
    <name evidence="1" type="primary">ligA</name>
    <name type="ordered locus">Cthe_1035</name>
</gene>
<accession>A3DE88</accession>
<keyword id="KW-0227">DNA damage</keyword>
<keyword id="KW-0234">DNA repair</keyword>
<keyword id="KW-0235">DNA replication</keyword>
<keyword id="KW-0436">Ligase</keyword>
<keyword id="KW-0460">Magnesium</keyword>
<keyword id="KW-0464">Manganese</keyword>
<keyword id="KW-0479">Metal-binding</keyword>
<keyword id="KW-0520">NAD</keyword>
<keyword id="KW-1185">Reference proteome</keyword>
<keyword id="KW-0862">Zinc</keyword>
<reference key="1">
    <citation type="submission" date="2007-02" db="EMBL/GenBank/DDBJ databases">
        <title>Complete sequence of Clostridium thermocellum ATCC 27405.</title>
        <authorList>
            <consortium name="US DOE Joint Genome Institute"/>
            <person name="Copeland A."/>
            <person name="Lucas S."/>
            <person name="Lapidus A."/>
            <person name="Barry K."/>
            <person name="Detter J.C."/>
            <person name="Glavina del Rio T."/>
            <person name="Hammon N."/>
            <person name="Israni S."/>
            <person name="Dalin E."/>
            <person name="Tice H."/>
            <person name="Pitluck S."/>
            <person name="Chertkov O."/>
            <person name="Brettin T."/>
            <person name="Bruce D."/>
            <person name="Han C."/>
            <person name="Tapia R."/>
            <person name="Gilna P."/>
            <person name="Schmutz J."/>
            <person name="Larimer F."/>
            <person name="Land M."/>
            <person name="Hauser L."/>
            <person name="Kyrpides N."/>
            <person name="Mikhailova N."/>
            <person name="Wu J.H.D."/>
            <person name="Newcomb M."/>
            <person name="Richardson P."/>
        </authorList>
    </citation>
    <scope>NUCLEOTIDE SEQUENCE [LARGE SCALE GENOMIC DNA]</scope>
    <source>
        <strain>ATCC 27405 / DSM 1237 / JCM 9322 / NBRC 103400 / NCIMB 10682 / NRRL B-4536 / VPI 7372</strain>
    </source>
</reference>
<proteinExistence type="inferred from homology"/>
<comment type="function">
    <text evidence="1">DNA ligase that catalyzes the formation of phosphodiester linkages between 5'-phosphoryl and 3'-hydroxyl groups in double-stranded DNA using NAD as a coenzyme and as the energy source for the reaction. It is essential for DNA replication and repair of damaged DNA.</text>
</comment>
<comment type="catalytic activity">
    <reaction evidence="1">
        <text>NAD(+) + (deoxyribonucleotide)n-3'-hydroxyl + 5'-phospho-(deoxyribonucleotide)m = (deoxyribonucleotide)n+m + AMP + beta-nicotinamide D-nucleotide.</text>
        <dbReference type="EC" id="6.5.1.2"/>
    </reaction>
</comment>
<comment type="cofactor">
    <cofactor evidence="1">
        <name>Mg(2+)</name>
        <dbReference type="ChEBI" id="CHEBI:18420"/>
    </cofactor>
    <cofactor evidence="1">
        <name>Mn(2+)</name>
        <dbReference type="ChEBI" id="CHEBI:29035"/>
    </cofactor>
</comment>
<comment type="similarity">
    <text evidence="1">Belongs to the NAD-dependent DNA ligase family. LigA subfamily.</text>
</comment>
<evidence type="ECO:0000255" key="1">
    <source>
        <dbReference type="HAMAP-Rule" id="MF_01588"/>
    </source>
</evidence>